<name>YMQ1_CAEEL</name>
<organism>
    <name type="scientific">Caenorhabditis elegans</name>
    <dbReference type="NCBI Taxonomy" id="6239"/>
    <lineage>
        <taxon>Eukaryota</taxon>
        <taxon>Metazoa</taxon>
        <taxon>Ecdysozoa</taxon>
        <taxon>Nematoda</taxon>
        <taxon>Chromadorea</taxon>
        <taxon>Rhabditida</taxon>
        <taxon>Rhabditina</taxon>
        <taxon>Rhabditomorpha</taxon>
        <taxon>Rhabditoidea</taxon>
        <taxon>Rhabditidae</taxon>
        <taxon>Peloderinae</taxon>
        <taxon>Caenorhabditis</taxon>
    </lineage>
</organism>
<dbReference type="EMBL" id="FO081469">
    <property type="protein sequence ID" value="CCD71825.1"/>
    <property type="molecule type" value="Genomic_DNA"/>
</dbReference>
<dbReference type="EMBL" id="FO081469">
    <property type="protein sequence ID" value="CCD71826.1"/>
    <property type="molecule type" value="Genomic_DNA"/>
</dbReference>
<dbReference type="EMBL" id="AJ001262">
    <property type="protein sequence ID" value="CAA04636.1"/>
    <property type="molecule type" value="mRNA"/>
</dbReference>
<dbReference type="PIR" id="S44837">
    <property type="entry name" value="S44837"/>
</dbReference>
<dbReference type="RefSeq" id="NP_001379980.1">
    <molecule id="P34492-2"/>
    <property type="nucleotide sequence ID" value="NM_001392163.1"/>
</dbReference>
<dbReference type="RefSeq" id="NP_498936.1">
    <property type="nucleotide sequence ID" value="NM_066535.6"/>
</dbReference>
<dbReference type="RefSeq" id="NP_498939.3">
    <molecule id="P34492-1"/>
    <property type="nucleotide sequence ID" value="NM_066538.4"/>
</dbReference>
<dbReference type="SMR" id="P34492"/>
<dbReference type="BioGRID" id="41435">
    <property type="interactions" value="1"/>
</dbReference>
<dbReference type="FunCoup" id="P34492">
    <property type="interactions" value="1591"/>
</dbReference>
<dbReference type="STRING" id="6239.K02D10.1a.1"/>
<dbReference type="PaxDb" id="6239-K02D10.1a"/>
<dbReference type="PeptideAtlas" id="P34492"/>
<dbReference type="EnsemblMetazoa" id="K02D10.1a.1">
    <molecule id="P34492-1"/>
    <property type="protein sequence ID" value="K02D10.1a.1"/>
    <property type="gene ID" value="WBGene00019301"/>
</dbReference>
<dbReference type="EnsemblMetazoa" id="K02D10.1b.1">
    <molecule id="P34492-2"/>
    <property type="protein sequence ID" value="K02D10.1b.1"/>
    <property type="gene ID" value="WBGene00019301"/>
</dbReference>
<dbReference type="GeneID" id="176232"/>
<dbReference type="KEGG" id="cel:CELE_K02D10.1"/>
<dbReference type="UCSC" id="K02D10.1b.1">
    <molecule id="P34492-1"/>
    <property type="organism name" value="c. elegans"/>
</dbReference>
<dbReference type="AGR" id="WB:WBGene00019301"/>
<dbReference type="CTD" id="176232"/>
<dbReference type="WormBase" id="K02D10.1a">
    <molecule id="P34492-1"/>
    <property type="protein sequence ID" value="CE17151"/>
    <property type="gene ID" value="WBGene00019301"/>
</dbReference>
<dbReference type="WormBase" id="K02D10.1b">
    <molecule id="P34492-2"/>
    <property type="protein sequence ID" value="CE29423"/>
    <property type="gene ID" value="WBGene00019301"/>
</dbReference>
<dbReference type="eggNOG" id="KOG2882">
    <property type="taxonomic scope" value="Eukaryota"/>
</dbReference>
<dbReference type="eggNOG" id="KOG2883">
    <property type="taxonomic scope" value="Eukaryota"/>
</dbReference>
<dbReference type="GeneTree" id="ENSGT00950000183018"/>
<dbReference type="HOGENOM" id="CLU_519950_0_0_1"/>
<dbReference type="InParanoid" id="P34492"/>
<dbReference type="OrthoDB" id="10262843at2759"/>
<dbReference type="PhylomeDB" id="P34492"/>
<dbReference type="Reactome" id="R-CEL-9013407">
    <property type="pathway name" value="RHOH GTPase cycle"/>
</dbReference>
<dbReference type="PRO" id="PR:P34492"/>
<dbReference type="Proteomes" id="UP000001940">
    <property type="component" value="Chromosome III"/>
</dbReference>
<dbReference type="Bgee" id="WBGene00019301">
    <property type="expression patterns" value="Expressed in larva and 4 other cell types or tissues"/>
</dbReference>
<dbReference type="ExpressionAtlas" id="P34492">
    <property type="expression patterns" value="baseline and differential"/>
</dbReference>
<dbReference type="GO" id="GO:0005739">
    <property type="term" value="C:mitochondrion"/>
    <property type="evidence" value="ECO:0000318"/>
    <property type="project" value="GO_Central"/>
</dbReference>
<dbReference type="GO" id="GO:0016791">
    <property type="term" value="F:phosphatase activity"/>
    <property type="evidence" value="ECO:0007669"/>
    <property type="project" value="InterPro"/>
</dbReference>
<dbReference type="GO" id="GO:0000423">
    <property type="term" value="P:mitophagy"/>
    <property type="evidence" value="ECO:0007669"/>
    <property type="project" value="UniProtKB-ARBA"/>
</dbReference>
<dbReference type="CDD" id="cd07532">
    <property type="entry name" value="HAD_PNPase_UmpH-like"/>
    <property type="match status" value="1"/>
</dbReference>
<dbReference type="FunFam" id="3.30.70.100:FF:000003">
    <property type="entry name" value="Protein NipSnap homolog 2"/>
    <property type="match status" value="1"/>
</dbReference>
<dbReference type="FunFam" id="3.30.70.100:FF:000082">
    <property type="entry name" value="Putative NipSnap protein K02D10.1"/>
    <property type="match status" value="1"/>
</dbReference>
<dbReference type="Gene3D" id="3.30.70.100">
    <property type="match status" value="2"/>
</dbReference>
<dbReference type="Gene3D" id="3.40.50.1000">
    <property type="entry name" value="HAD superfamily/HAD-like"/>
    <property type="match status" value="2"/>
</dbReference>
<dbReference type="InterPro" id="IPR011008">
    <property type="entry name" value="Dimeric_a/b-barrel"/>
</dbReference>
<dbReference type="InterPro" id="IPR036412">
    <property type="entry name" value="HAD-like_sf"/>
</dbReference>
<dbReference type="InterPro" id="IPR006357">
    <property type="entry name" value="HAD-SF_hydro_IIA"/>
</dbReference>
<dbReference type="InterPro" id="IPR023214">
    <property type="entry name" value="HAD_sf"/>
</dbReference>
<dbReference type="InterPro" id="IPR012577">
    <property type="entry name" value="NIPSNAP"/>
</dbReference>
<dbReference type="InterPro" id="IPR051557">
    <property type="entry name" value="NipSnap_domain"/>
</dbReference>
<dbReference type="InterPro" id="IPR006349">
    <property type="entry name" value="PGP_euk"/>
</dbReference>
<dbReference type="NCBIfam" id="TIGR01460">
    <property type="entry name" value="HAD-SF-IIA"/>
    <property type="match status" value="1"/>
</dbReference>
<dbReference type="NCBIfam" id="TIGR01452">
    <property type="entry name" value="PGP_euk"/>
    <property type="match status" value="1"/>
</dbReference>
<dbReference type="PANTHER" id="PTHR21017">
    <property type="entry name" value="NIPSNAP-RELATED"/>
    <property type="match status" value="1"/>
</dbReference>
<dbReference type="PANTHER" id="PTHR21017:SF17">
    <property type="entry name" value="PROTEIN NIPSNAP"/>
    <property type="match status" value="1"/>
</dbReference>
<dbReference type="Pfam" id="PF13344">
    <property type="entry name" value="Hydrolase_6"/>
    <property type="match status" value="1"/>
</dbReference>
<dbReference type="Pfam" id="PF13242">
    <property type="entry name" value="Hydrolase_like"/>
    <property type="match status" value="1"/>
</dbReference>
<dbReference type="Pfam" id="PF07978">
    <property type="entry name" value="NIPSNAP"/>
    <property type="match status" value="1"/>
</dbReference>
<dbReference type="SUPFAM" id="SSF54909">
    <property type="entry name" value="Dimeric alpha+beta barrel"/>
    <property type="match status" value="2"/>
</dbReference>
<dbReference type="SUPFAM" id="SSF56784">
    <property type="entry name" value="HAD-like"/>
    <property type="match status" value="1"/>
</dbReference>
<gene>
    <name type="ORF">K02D10.1</name>
</gene>
<accession>P34492</accession>
<accession>O61223</accession>
<accession>Q95QD2</accession>
<sequence>MSINRISKNELLANYDTFLFDADGVLWTGDIPVPGAIEWINLLLEDPSKKVFVLTNNSTKTLEQYMKKIEKLGFGHLGRNNVISPAIVLADYLKSNADKFSGEYVYLIGTENLKATLENDGGVKCFGTGPDSIRDHTDGDFIHKVDMSIAPKAVVCSYDAHFSYPKIMKASNYLQDPSVEYLVTNQDYTFPGPVPGVVIPGSGATSAAVTAVTGRDPKVFGKPHKPMADFLLRRAHVDPKRTVMFGDRLDTDIMFGNANGQLSATPIQCQNESENSEPQKQGWISRLLKGQSMDPSSWQKQSHSSLLSNSELMYEFMTHNYRPGEQDAYLDAFGKYKNEMNQKNPSIELVGSWTCAYGRTRDQAIHLWRHNKGYEDVDSSISLHGKDSGIRAADNDVAKLCGRRKNLIVKSFSYWREPEQRPPNHVYDLRSYVLQPGTMIDWASAWAKGIQYRREANQDVGGFFAQVGQLYVVYHIWAYPSMSGRNDTRHATWAKPGWDATVANTVPLIKKMQSKILTPTKYSQLE</sequence>
<evidence type="ECO:0000303" key="1">
    <source>
    </source>
</evidence>
<evidence type="ECO:0000305" key="2"/>
<feature type="chain" id="PRO_0000221156" description="Putative NipSnap protein K02D10.1">
    <location>
        <begin position="1"/>
        <end position="526"/>
    </location>
</feature>
<feature type="splice variant" id="VSP_008868" description="In isoform b." evidence="1">
    <location>
        <begin position="1"/>
        <end position="237"/>
    </location>
</feature>
<feature type="splice variant" id="VSP_016111" description="In isoform b." evidence="1">
    <original>DPKRTVMFGDRLDTDIMFGNANG</original>
    <variation>MNRSGQRLIVSAPRQIAFSTAVR</variation>
    <location>
        <begin position="238"/>
        <end position="260"/>
    </location>
</feature>
<comment type="alternative products">
    <event type="alternative splicing"/>
    <isoform>
        <id>P34492-1</id>
        <name>a</name>
        <sequence type="displayed"/>
    </isoform>
    <isoform>
        <id>P34492-2</id>
        <name>b</name>
        <sequence type="described" ref="VSP_008868 VSP_016111"/>
    </isoform>
</comment>
<comment type="similarity">
    <text evidence="2">Belongs to the NipSnap family.</text>
</comment>
<keyword id="KW-0025">Alternative splicing</keyword>
<keyword id="KW-1185">Reference proteome</keyword>
<proteinExistence type="evidence at transcript level"/>
<protein>
    <recommendedName>
        <fullName>Putative NipSnap protein K02D10.1</fullName>
    </recommendedName>
</protein>
<reference key="1">
    <citation type="journal article" date="1994" name="Nature">
        <title>2.2 Mb of contiguous nucleotide sequence from chromosome III of C. elegans.</title>
        <authorList>
            <person name="Wilson R."/>
            <person name="Ainscough R."/>
            <person name="Anderson K."/>
            <person name="Baynes C."/>
            <person name="Berks M."/>
            <person name="Bonfield J."/>
            <person name="Burton J."/>
            <person name="Connell M."/>
            <person name="Copsey T."/>
            <person name="Cooper J."/>
            <person name="Coulson A."/>
            <person name="Craxton M."/>
            <person name="Dear S."/>
            <person name="Du Z."/>
            <person name="Durbin R."/>
            <person name="Favello A."/>
            <person name="Fraser A."/>
            <person name="Fulton L."/>
            <person name="Gardner A."/>
            <person name="Green P."/>
            <person name="Hawkins T."/>
            <person name="Hillier L."/>
            <person name="Jier M."/>
            <person name="Johnston L."/>
            <person name="Jones M."/>
            <person name="Kershaw J."/>
            <person name="Kirsten J."/>
            <person name="Laisster N."/>
            <person name="Latreille P."/>
            <person name="Lightning J."/>
            <person name="Lloyd C."/>
            <person name="Mortimore B."/>
            <person name="O'Callaghan M."/>
            <person name="Parsons J."/>
            <person name="Percy C."/>
            <person name="Rifken L."/>
            <person name="Roopra A."/>
            <person name="Saunders D."/>
            <person name="Shownkeen R."/>
            <person name="Sims M."/>
            <person name="Smaldon N."/>
            <person name="Smith A."/>
            <person name="Smith M."/>
            <person name="Sonnhammer E."/>
            <person name="Staden R."/>
            <person name="Sulston J."/>
            <person name="Thierry-Mieg J."/>
            <person name="Thomas K."/>
            <person name="Vaudin M."/>
            <person name="Vaughan K."/>
            <person name="Waterston R."/>
            <person name="Watson A."/>
            <person name="Weinstock L."/>
            <person name="Wilkinson-Sproat J."/>
            <person name="Wohldman P."/>
        </authorList>
    </citation>
    <scope>NUCLEOTIDE SEQUENCE [LARGE SCALE GENOMIC DNA]</scope>
    <source>
        <strain>Bristol N2</strain>
    </source>
</reference>
<reference key="2">
    <citation type="journal article" date="1998" name="Science">
        <title>Genome sequence of the nematode C. elegans: a platform for investigating biology.</title>
        <authorList>
            <consortium name="The C. elegans sequencing consortium"/>
        </authorList>
    </citation>
    <scope>NUCLEOTIDE SEQUENCE [LARGE SCALE GENOMIC DNA]</scope>
    <scope>ALTERNATIVE SPLICING</scope>
    <source>
        <strain>Bristol N2</strain>
    </source>
</reference>
<reference key="3">
    <citation type="journal article" date="1998" name="Gene">
        <title>Characterization of the human NIPSNAP1 gene from 22q12: a member of a novel gene family.</title>
        <authorList>
            <person name="Seroussi E."/>
            <person name="Pan H.Q."/>
            <person name="Kedra D."/>
            <person name="Roe B.A."/>
            <person name="Dumanski J.P."/>
        </authorList>
    </citation>
    <scope>NUCLEOTIDE SEQUENCE [MRNA] OF 296-526 (ISOFORMS A AND B)</scope>
</reference>